<keyword id="KW-0975">Bacterial flagellum</keyword>
<protein>
    <recommendedName>
        <fullName evidence="1">Flagellar hook-basal body complex protein FliE</fullName>
    </recommendedName>
</protein>
<name>FLIE_RHIR8</name>
<feature type="chain" id="PRO_1000148045" description="Flagellar hook-basal body complex protein FliE">
    <location>
        <begin position="1"/>
        <end position="116"/>
    </location>
</feature>
<comment type="subcellular location">
    <subcellularLocation>
        <location evidence="1">Bacterial flagellum basal body</location>
    </subcellularLocation>
</comment>
<comment type="similarity">
    <text evidence="1">Belongs to the FliE family.</text>
</comment>
<evidence type="ECO:0000255" key="1">
    <source>
        <dbReference type="HAMAP-Rule" id="MF_00724"/>
    </source>
</evidence>
<organism>
    <name type="scientific">Rhizobium rhizogenes (strain K84 / ATCC BAA-868)</name>
    <name type="common">Agrobacterium radiobacter</name>
    <dbReference type="NCBI Taxonomy" id="311403"/>
    <lineage>
        <taxon>Bacteria</taxon>
        <taxon>Pseudomonadati</taxon>
        <taxon>Pseudomonadota</taxon>
        <taxon>Alphaproteobacteria</taxon>
        <taxon>Hyphomicrobiales</taxon>
        <taxon>Rhizobiaceae</taxon>
        <taxon>Rhizobium/Agrobacterium group</taxon>
        <taxon>Rhizobium</taxon>
    </lineage>
</organism>
<sequence>MIDAIKNVSSLSATRGLGSIATDLSSAASNAIASTPETAIGSSAVGSFASVMSDVAKNTVSTLKEAENASFAGIKGTMSTREVVDKVMQADQTLQTAIALRDKMVSAFLDITKMQI</sequence>
<gene>
    <name evidence="1" type="primary">fliE</name>
    <name type="ordered locus">Arad_0880</name>
</gene>
<dbReference type="EMBL" id="CP000628">
    <property type="protein sequence ID" value="ACM25468.1"/>
    <property type="molecule type" value="Genomic_DNA"/>
</dbReference>
<dbReference type="RefSeq" id="WP_007695750.1">
    <property type="nucleotide sequence ID" value="NC_011985.1"/>
</dbReference>
<dbReference type="SMR" id="B9J966"/>
<dbReference type="STRING" id="311403.Arad_0880"/>
<dbReference type="KEGG" id="ara:Arad_0880"/>
<dbReference type="eggNOG" id="COG1677">
    <property type="taxonomic scope" value="Bacteria"/>
</dbReference>
<dbReference type="HOGENOM" id="CLU_147249_2_0_5"/>
<dbReference type="Proteomes" id="UP000001600">
    <property type="component" value="Chromosome 1"/>
</dbReference>
<dbReference type="GO" id="GO:0009425">
    <property type="term" value="C:bacterial-type flagellum basal body"/>
    <property type="evidence" value="ECO:0007669"/>
    <property type="project" value="UniProtKB-SubCell"/>
</dbReference>
<dbReference type="GO" id="GO:0003774">
    <property type="term" value="F:cytoskeletal motor activity"/>
    <property type="evidence" value="ECO:0007669"/>
    <property type="project" value="InterPro"/>
</dbReference>
<dbReference type="GO" id="GO:0005198">
    <property type="term" value="F:structural molecule activity"/>
    <property type="evidence" value="ECO:0007669"/>
    <property type="project" value="InterPro"/>
</dbReference>
<dbReference type="GO" id="GO:0071973">
    <property type="term" value="P:bacterial-type flagellum-dependent cell motility"/>
    <property type="evidence" value="ECO:0007669"/>
    <property type="project" value="InterPro"/>
</dbReference>
<dbReference type="HAMAP" id="MF_00724">
    <property type="entry name" value="FliE"/>
    <property type="match status" value="1"/>
</dbReference>
<dbReference type="InterPro" id="IPR001624">
    <property type="entry name" value="FliE"/>
</dbReference>
<dbReference type="PANTHER" id="PTHR34653">
    <property type="match status" value="1"/>
</dbReference>
<dbReference type="PANTHER" id="PTHR34653:SF1">
    <property type="entry name" value="FLAGELLAR HOOK-BASAL BODY COMPLEX PROTEIN FLIE"/>
    <property type="match status" value="1"/>
</dbReference>
<dbReference type="Pfam" id="PF02049">
    <property type="entry name" value="FliE"/>
    <property type="match status" value="1"/>
</dbReference>
<proteinExistence type="inferred from homology"/>
<accession>B9J966</accession>
<reference key="1">
    <citation type="journal article" date="2009" name="J. Bacteriol.">
        <title>Genome sequences of three Agrobacterium biovars help elucidate the evolution of multichromosome genomes in bacteria.</title>
        <authorList>
            <person name="Slater S.C."/>
            <person name="Goldman B.S."/>
            <person name="Goodner B."/>
            <person name="Setubal J.C."/>
            <person name="Farrand S.K."/>
            <person name="Nester E.W."/>
            <person name="Burr T.J."/>
            <person name="Banta L."/>
            <person name="Dickerman A.W."/>
            <person name="Paulsen I."/>
            <person name="Otten L."/>
            <person name="Suen G."/>
            <person name="Welch R."/>
            <person name="Almeida N.F."/>
            <person name="Arnold F."/>
            <person name="Burton O.T."/>
            <person name="Du Z."/>
            <person name="Ewing A."/>
            <person name="Godsy E."/>
            <person name="Heisel S."/>
            <person name="Houmiel K.L."/>
            <person name="Jhaveri J."/>
            <person name="Lu J."/>
            <person name="Miller N.M."/>
            <person name="Norton S."/>
            <person name="Chen Q."/>
            <person name="Phoolcharoen W."/>
            <person name="Ohlin V."/>
            <person name="Ondrusek D."/>
            <person name="Pride N."/>
            <person name="Stricklin S.L."/>
            <person name="Sun J."/>
            <person name="Wheeler C."/>
            <person name="Wilson L."/>
            <person name="Zhu H."/>
            <person name="Wood D.W."/>
        </authorList>
    </citation>
    <scope>NUCLEOTIDE SEQUENCE [LARGE SCALE GENOMIC DNA]</scope>
    <source>
        <strain>K84 / ATCC BAA-868</strain>
    </source>
</reference>